<reference key="1">
    <citation type="journal article" date="2008" name="Genome Res.">
        <title>Insights from the complete genome sequence of Mycobacterium marinum on the evolution of Mycobacterium tuberculosis.</title>
        <authorList>
            <person name="Stinear T.P."/>
            <person name="Seemann T."/>
            <person name="Harrison P.F."/>
            <person name="Jenkin G.A."/>
            <person name="Davies J.K."/>
            <person name="Johnson P.D."/>
            <person name="Abdellah Z."/>
            <person name="Arrowsmith C."/>
            <person name="Chillingworth T."/>
            <person name="Churcher C."/>
            <person name="Clarke K."/>
            <person name="Cronin A."/>
            <person name="Davis P."/>
            <person name="Goodhead I."/>
            <person name="Holroyd N."/>
            <person name="Jagels K."/>
            <person name="Lord A."/>
            <person name="Moule S."/>
            <person name="Mungall K."/>
            <person name="Norbertczak H."/>
            <person name="Quail M.A."/>
            <person name="Rabbinowitsch E."/>
            <person name="Walker D."/>
            <person name="White B."/>
            <person name="Whitehead S."/>
            <person name="Small P.L."/>
            <person name="Brosch R."/>
            <person name="Ramakrishnan L."/>
            <person name="Fischbach M.A."/>
            <person name="Parkhill J."/>
            <person name="Cole S.T."/>
        </authorList>
    </citation>
    <scope>NUCLEOTIDE SEQUENCE [LARGE SCALE GENOMIC DNA]</scope>
    <source>
        <strain>ATCC BAA-535 / M</strain>
    </source>
</reference>
<keyword id="KW-0963">Cytoplasm</keyword>
<keyword id="KW-0378">Hydrolase</keyword>
<keyword id="KW-0520">NAD</keyword>
<keyword id="KW-0554">One-carbon metabolism</keyword>
<keyword id="KW-1185">Reference proteome</keyword>
<accession>B2HEP6</accession>
<organism>
    <name type="scientific">Mycobacterium marinum (strain ATCC BAA-535 / M)</name>
    <dbReference type="NCBI Taxonomy" id="216594"/>
    <lineage>
        <taxon>Bacteria</taxon>
        <taxon>Bacillati</taxon>
        <taxon>Actinomycetota</taxon>
        <taxon>Actinomycetes</taxon>
        <taxon>Mycobacteriales</taxon>
        <taxon>Mycobacteriaceae</taxon>
        <taxon>Mycobacterium</taxon>
        <taxon>Mycobacterium ulcerans group</taxon>
    </lineage>
</organism>
<feature type="chain" id="PRO_1000129290" description="Adenosylhomocysteinase">
    <location>
        <begin position="1"/>
        <end position="492"/>
    </location>
</feature>
<feature type="binding site" evidence="1">
    <location>
        <position position="68"/>
    </location>
    <ligand>
        <name>substrate</name>
    </ligand>
</feature>
<feature type="binding site" evidence="1">
    <location>
        <position position="153"/>
    </location>
    <ligand>
        <name>substrate</name>
    </ligand>
</feature>
<feature type="binding site" evidence="1">
    <location>
        <position position="215"/>
    </location>
    <ligand>
        <name>substrate</name>
    </ligand>
</feature>
<feature type="binding site" evidence="1">
    <location>
        <begin position="216"/>
        <end position="218"/>
    </location>
    <ligand>
        <name>NAD(+)</name>
        <dbReference type="ChEBI" id="CHEBI:57540"/>
    </ligand>
</feature>
<feature type="binding site" evidence="1">
    <location>
        <position position="245"/>
    </location>
    <ligand>
        <name>substrate</name>
    </ligand>
</feature>
<feature type="binding site" evidence="1">
    <location>
        <position position="249"/>
    </location>
    <ligand>
        <name>substrate</name>
    </ligand>
</feature>
<feature type="binding site" evidence="1">
    <location>
        <position position="250"/>
    </location>
    <ligand>
        <name>NAD(+)</name>
        <dbReference type="ChEBI" id="CHEBI:57540"/>
    </ligand>
</feature>
<feature type="binding site" evidence="1">
    <location>
        <begin position="279"/>
        <end position="284"/>
    </location>
    <ligand>
        <name>NAD(+)</name>
        <dbReference type="ChEBI" id="CHEBI:57540"/>
    </ligand>
</feature>
<feature type="binding site" evidence="1">
    <location>
        <position position="302"/>
    </location>
    <ligand>
        <name>NAD(+)</name>
        <dbReference type="ChEBI" id="CHEBI:57540"/>
    </ligand>
</feature>
<feature type="binding site" evidence="1">
    <location>
        <position position="337"/>
    </location>
    <ligand>
        <name>NAD(+)</name>
        <dbReference type="ChEBI" id="CHEBI:57540"/>
    </ligand>
</feature>
<feature type="binding site" evidence="1">
    <location>
        <begin position="358"/>
        <end position="360"/>
    </location>
    <ligand>
        <name>NAD(+)</name>
        <dbReference type="ChEBI" id="CHEBI:57540"/>
    </ligand>
</feature>
<feature type="binding site" evidence="1">
    <location>
        <position position="406"/>
    </location>
    <ligand>
        <name>NAD(+)</name>
        <dbReference type="ChEBI" id="CHEBI:57540"/>
    </ligand>
</feature>
<dbReference type="EC" id="3.13.2.1" evidence="1"/>
<dbReference type="EMBL" id="CP000854">
    <property type="protein sequence ID" value="ACC39753.1"/>
    <property type="molecule type" value="Genomic_DNA"/>
</dbReference>
<dbReference type="RefSeq" id="WP_012393163.1">
    <property type="nucleotide sequence ID" value="NC_010612.1"/>
</dbReference>
<dbReference type="SMR" id="B2HEP6"/>
<dbReference type="STRING" id="216594.MMAR_1295"/>
<dbReference type="GeneID" id="34341909"/>
<dbReference type="GeneID" id="93435937"/>
<dbReference type="KEGG" id="mmi:MMAR_1295"/>
<dbReference type="eggNOG" id="COG0499">
    <property type="taxonomic scope" value="Bacteria"/>
</dbReference>
<dbReference type="HOGENOM" id="CLU_025194_2_1_11"/>
<dbReference type="OrthoDB" id="9802717at2"/>
<dbReference type="UniPathway" id="UPA00314">
    <property type="reaction ID" value="UER00076"/>
</dbReference>
<dbReference type="Proteomes" id="UP000001190">
    <property type="component" value="Chromosome"/>
</dbReference>
<dbReference type="GO" id="GO:0005829">
    <property type="term" value="C:cytosol"/>
    <property type="evidence" value="ECO:0007669"/>
    <property type="project" value="TreeGrafter"/>
</dbReference>
<dbReference type="GO" id="GO:0004013">
    <property type="term" value="F:adenosylhomocysteinase activity"/>
    <property type="evidence" value="ECO:0007669"/>
    <property type="project" value="UniProtKB-UniRule"/>
</dbReference>
<dbReference type="GO" id="GO:0071269">
    <property type="term" value="P:L-homocysteine biosynthetic process"/>
    <property type="evidence" value="ECO:0007669"/>
    <property type="project" value="UniProtKB-UniRule"/>
</dbReference>
<dbReference type="GO" id="GO:0006730">
    <property type="term" value="P:one-carbon metabolic process"/>
    <property type="evidence" value="ECO:0007669"/>
    <property type="project" value="UniProtKB-KW"/>
</dbReference>
<dbReference type="GO" id="GO:0033353">
    <property type="term" value="P:S-adenosylmethionine cycle"/>
    <property type="evidence" value="ECO:0007669"/>
    <property type="project" value="TreeGrafter"/>
</dbReference>
<dbReference type="CDD" id="cd00401">
    <property type="entry name" value="SAHH"/>
    <property type="match status" value="1"/>
</dbReference>
<dbReference type="FunFam" id="3.40.50.720:FF:000004">
    <property type="entry name" value="Adenosylhomocysteinase"/>
    <property type="match status" value="1"/>
</dbReference>
<dbReference type="Gene3D" id="3.40.50.1480">
    <property type="entry name" value="Adenosylhomocysteinase-like"/>
    <property type="match status" value="1"/>
</dbReference>
<dbReference type="Gene3D" id="3.40.50.720">
    <property type="entry name" value="NAD(P)-binding Rossmann-like Domain"/>
    <property type="match status" value="1"/>
</dbReference>
<dbReference type="HAMAP" id="MF_00563">
    <property type="entry name" value="AdoHcyase"/>
    <property type="match status" value="1"/>
</dbReference>
<dbReference type="InterPro" id="IPR042172">
    <property type="entry name" value="Adenosylhomocyst_ase-like_sf"/>
</dbReference>
<dbReference type="InterPro" id="IPR000043">
    <property type="entry name" value="Adenosylhomocysteinase-like"/>
</dbReference>
<dbReference type="InterPro" id="IPR015878">
    <property type="entry name" value="Ado_hCys_hydrolase_NAD-bd"/>
</dbReference>
<dbReference type="InterPro" id="IPR036291">
    <property type="entry name" value="NAD(P)-bd_dom_sf"/>
</dbReference>
<dbReference type="InterPro" id="IPR020082">
    <property type="entry name" value="S-Ado-L-homoCys_hydrolase_CS"/>
</dbReference>
<dbReference type="NCBIfam" id="TIGR00936">
    <property type="entry name" value="ahcY"/>
    <property type="match status" value="1"/>
</dbReference>
<dbReference type="NCBIfam" id="NF004005">
    <property type="entry name" value="PRK05476.2-3"/>
    <property type="match status" value="1"/>
</dbReference>
<dbReference type="PANTHER" id="PTHR23420">
    <property type="entry name" value="ADENOSYLHOMOCYSTEINASE"/>
    <property type="match status" value="1"/>
</dbReference>
<dbReference type="PANTHER" id="PTHR23420:SF0">
    <property type="entry name" value="ADENOSYLHOMOCYSTEINASE"/>
    <property type="match status" value="1"/>
</dbReference>
<dbReference type="Pfam" id="PF05221">
    <property type="entry name" value="AdoHcyase"/>
    <property type="match status" value="1"/>
</dbReference>
<dbReference type="Pfam" id="PF00670">
    <property type="entry name" value="AdoHcyase_NAD"/>
    <property type="match status" value="1"/>
</dbReference>
<dbReference type="PIRSF" id="PIRSF001109">
    <property type="entry name" value="Ad_hcy_hydrolase"/>
    <property type="match status" value="1"/>
</dbReference>
<dbReference type="SMART" id="SM00996">
    <property type="entry name" value="AdoHcyase"/>
    <property type="match status" value="1"/>
</dbReference>
<dbReference type="SMART" id="SM00997">
    <property type="entry name" value="AdoHcyase_NAD"/>
    <property type="match status" value="1"/>
</dbReference>
<dbReference type="SUPFAM" id="SSF52283">
    <property type="entry name" value="Formate/glycerate dehydrogenase catalytic domain-like"/>
    <property type="match status" value="1"/>
</dbReference>
<dbReference type="SUPFAM" id="SSF51735">
    <property type="entry name" value="NAD(P)-binding Rossmann-fold domains"/>
    <property type="match status" value="1"/>
</dbReference>
<dbReference type="PROSITE" id="PS00738">
    <property type="entry name" value="ADOHCYASE_1"/>
    <property type="match status" value="1"/>
</dbReference>
<dbReference type="PROSITE" id="PS00739">
    <property type="entry name" value="ADOHCYASE_2"/>
    <property type="match status" value="1"/>
</dbReference>
<comment type="function">
    <text evidence="1">May play a key role in the regulation of the intracellular concentration of adenosylhomocysteine.</text>
</comment>
<comment type="catalytic activity">
    <reaction evidence="1">
        <text>S-adenosyl-L-homocysteine + H2O = L-homocysteine + adenosine</text>
        <dbReference type="Rhea" id="RHEA:21708"/>
        <dbReference type="ChEBI" id="CHEBI:15377"/>
        <dbReference type="ChEBI" id="CHEBI:16335"/>
        <dbReference type="ChEBI" id="CHEBI:57856"/>
        <dbReference type="ChEBI" id="CHEBI:58199"/>
        <dbReference type="EC" id="3.13.2.1"/>
    </reaction>
</comment>
<comment type="cofactor">
    <cofactor evidence="1">
        <name>NAD(+)</name>
        <dbReference type="ChEBI" id="CHEBI:57540"/>
    </cofactor>
    <text evidence="1">Binds 1 NAD(+) per subunit.</text>
</comment>
<comment type="pathway">
    <text evidence="1">Amino-acid biosynthesis; L-homocysteine biosynthesis; L-homocysteine from S-adenosyl-L-homocysteine: step 1/1.</text>
</comment>
<comment type="subcellular location">
    <subcellularLocation>
        <location evidence="1">Cytoplasm</location>
    </subcellularLocation>
</comment>
<comment type="similarity">
    <text evidence="1">Belongs to the adenosylhomocysteinase family.</text>
</comment>
<protein>
    <recommendedName>
        <fullName evidence="1">Adenosylhomocysteinase</fullName>
        <ecNumber evidence="1">3.13.2.1</ecNumber>
    </recommendedName>
    <alternativeName>
        <fullName evidence="1">S-adenosyl-L-homocysteine hydrolase</fullName>
        <shortName evidence="1">AdoHcyase</shortName>
    </alternativeName>
</protein>
<sequence>MTTTETSLSADTKNGIDFKIADLSLADFGRKELRIAEHEMPGLMSLRREYAEVQPLKGARISGSLHMTVQTAVLIETLTALGAEVRWASCNIFSTQDHAAAAVVVGPHGTPEEPKGVPVFAWKGESLEEYWWCAEQMLTWPDSDKPANMILDDGGDATMLVLRGMQYEKAGVVPPAEEDDSAEWKVFLGLLRSRFETDKGKWTKIAESVKGVTEETTTGVLRLYQFAAAGDLAFPAINVNDSVTKSKFDNKYGTRHSLIDGINRGTDALIGGKKVLICGYGDVGKGCAEAMKGQGARVSVTEIDPINALQAMMEGFDVVTVEDAIGDADIVVTSTGNKDIIMLEHIKAMKDHSILGNIGHFDNEIDMAGLERSGATRTNIKPQVDLWTFGDTGRSIIVLSEGRLLNLGNATGHPSFVMSNSFANQTIAQIELWTKNDEYDNEVYRLPKHLDEKVARIHVEALGGRLTKLTKDQAEYLGVDVEGPYKPDHYRY</sequence>
<gene>
    <name evidence="1" type="primary">ahcY</name>
    <name type="ordered locus">MMAR_1295</name>
</gene>
<name>SAHH_MYCMM</name>
<proteinExistence type="inferred from homology"/>
<evidence type="ECO:0000255" key="1">
    <source>
        <dbReference type="HAMAP-Rule" id="MF_00563"/>
    </source>
</evidence>